<dbReference type="EC" id="2.7.1.71" evidence="1"/>
<dbReference type="EMBL" id="CP000036">
    <property type="protein sequence ID" value="ABB67864.1"/>
    <property type="molecule type" value="Genomic_DNA"/>
</dbReference>
<dbReference type="RefSeq" id="WP_000818618.1">
    <property type="nucleotide sequence ID" value="NC_007613.1"/>
</dbReference>
<dbReference type="SMR" id="Q31VP4"/>
<dbReference type="GeneID" id="93778608"/>
<dbReference type="KEGG" id="sbo:SBO_3377"/>
<dbReference type="HOGENOM" id="CLU_057607_2_2_6"/>
<dbReference type="UniPathway" id="UPA00053">
    <property type="reaction ID" value="UER00088"/>
</dbReference>
<dbReference type="Proteomes" id="UP000007067">
    <property type="component" value="Chromosome"/>
</dbReference>
<dbReference type="GO" id="GO:0005829">
    <property type="term" value="C:cytosol"/>
    <property type="evidence" value="ECO:0007669"/>
    <property type="project" value="TreeGrafter"/>
</dbReference>
<dbReference type="GO" id="GO:0005524">
    <property type="term" value="F:ATP binding"/>
    <property type="evidence" value="ECO:0007669"/>
    <property type="project" value="UniProtKB-UniRule"/>
</dbReference>
<dbReference type="GO" id="GO:0000287">
    <property type="term" value="F:magnesium ion binding"/>
    <property type="evidence" value="ECO:0007669"/>
    <property type="project" value="UniProtKB-UniRule"/>
</dbReference>
<dbReference type="GO" id="GO:0004765">
    <property type="term" value="F:shikimate kinase activity"/>
    <property type="evidence" value="ECO:0007669"/>
    <property type="project" value="UniProtKB-UniRule"/>
</dbReference>
<dbReference type="GO" id="GO:0008652">
    <property type="term" value="P:amino acid biosynthetic process"/>
    <property type="evidence" value="ECO:0007669"/>
    <property type="project" value="UniProtKB-KW"/>
</dbReference>
<dbReference type="GO" id="GO:0009073">
    <property type="term" value="P:aromatic amino acid family biosynthetic process"/>
    <property type="evidence" value="ECO:0007669"/>
    <property type="project" value="UniProtKB-KW"/>
</dbReference>
<dbReference type="GO" id="GO:0009423">
    <property type="term" value="P:chorismate biosynthetic process"/>
    <property type="evidence" value="ECO:0007669"/>
    <property type="project" value="UniProtKB-UniRule"/>
</dbReference>
<dbReference type="CDD" id="cd00464">
    <property type="entry name" value="SK"/>
    <property type="match status" value="1"/>
</dbReference>
<dbReference type="FunFam" id="3.40.50.300:FF:000099">
    <property type="entry name" value="Shikimate kinase 1"/>
    <property type="match status" value="1"/>
</dbReference>
<dbReference type="Gene3D" id="3.40.50.300">
    <property type="entry name" value="P-loop containing nucleotide triphosphate hydrolases"/>
    <property type="match status" value="1"/>
</dbReference>
<dbReference type="HAMAP" id="MF_00109">
    <property type="entry name" value="Shikimate_kinase"/>
    <property type="match status" value="1"/>
</dbReference>
<dbReference type="InterPro" id="IPR027417">
    <property type="entry name" value="P-loop_NTPase"/>
</dbReference>
<dbReference type="InterPro" id="IPR031322">
    <property type="entry name" value="Shikimate/glucono_kinase"/>
</dbReference>
<dbReference type="InterPro" id="IPR000623">
    <property type="entry name" value="Shikimate_kinase/TSH1"/>
</dbReference>
<dbReference type="InterPro" id="IPR023000">
    <property type="entry name" value="Shikimate_kinase_CS"/>
</dbReference>
<dbReference type="NCBIfam" id="NF003456">
    <property type="entry name" value="PRK05057.1"/>
    <property type="match status" value="1"/>
</dbReference>
<dbReference type="PANTHER" id="PTHR21087">
    <property type="entry name" value="SHIKIMATE KINASE"/>
    <property type="match status" value="1"/>
</dbReference>
<dbReference type="PANTHER" id="PTHR21087:SF16">
    <property type="entry name" value="SHIKIMATE KINASE 1, CHLOROPLASTIC"/>
    <property type="match status" value="1"/>
</dbReference>
<dbReference type="Pfam" id="PF01202">
    <property type="entry name" value="SKI"/>
    <property type="match status" value="1"/>
</dbReference>
<dbReference type="PRINTS" id="PR01100">
    <property type="entry name" value="SHIKIMTKNASE"/>
</dbReference>
<dbReference type="SUPFAM" id="SSF52540">
    <property type="entry name" value="P-loop containing nucleoside triphosphate hydrolases"/>
    <property type="match status" value="1"/>
</dbReference>
<dbReference type="PROSITE" id="PS01128">
    <property type="entry name" value="SHIKIMATE_KINASE"/>
    <property type="match status" value="1"/>
</dbReference>
<gene>
    <name evidence="1" type="primary">aroK</name>
    <name type="ordered locus">SBO_3377</name>
</gene>
<accession>Q31VP4</accession>
<evidence type="ECO:0000255" key="1">
    <source>
        <dbReference type="HAMAP-Rule" id="MF_00109"/>
    </source>
</evidence>
<organism>
    <name type="scientific">Shigella boydii serotype 4 (strain Sb227)</name>
    <dbReference type="NCBI Taxonomy" id="300268"/>
    <lineage>
        <taxon>Bacteria</taxon>
        <taxon>Pseudomonadati</taxon>
        <taxon>Pseudomonadota</taxon>
        <taxon>Gammaproteobacteria</taxon>
        <taxon>Enterobacterales</taxon>
        <taxon>Enterobacteriaceae</taxon>
        <taxon>Shigella</taxon>
    </lineage>
</organism>
<feature type="chain" id="PRO_0000237929" description="Shikimate kinase 1">
    <location>
        <begin position="1"/>
        <end position="173"/>
    </location>
</feature>
<feature type="binding site" evidence="1">
    <location>
        <begin position="14"/>
        <end position="19"/>
    </location>
    <ligand>
        <name>ATP</name>
        <dbReference type="ChEBI" id="CHEBI:30616"/>
    </ligand>
</feature>
<feature type="binding site" evidence="1">
    <location>
        <position position="18"/>
    </location>
    <ligand>
        <name>Mg(2+)</name>
        <dbReference type="ChEBI" id="CHEBI:18420"/>
    </ligand>
</feature>
<feature type="binding site" evidence="1">
    <location>
        <position position="36"/>
    </location>
    <ligand>
        <name>substrate</name>
    </ligand>
</feature>
<feature type="binding site" evidence="1">
    <location>
        <position position="60"/>
    </location>
    <ligand>
        <name>substrate</name>
    </ligand>
</feature>
<feature type="binding site" evidence="1">
    <location>
        <position position="82"/>
    </location>
    <ligand>
        <name>substrate</name>
    </ligand>
</feature>
<feature type="binding site" evidence="1">
    <location>
        <position position="120"/>
    </location>
    <ligand>
        <name>ATP</name>
        <dbReference type="ChEBI" id="CHEBI:30616"/>
    </ligand>
</feature>
<feature type="binding site" evidence="1">
    <location>
        <position position="140"/>
    </location>
    <ligand>
        <name>substrate</name>
    </ligand>
</feature>
<feature type="binding site" evidence="1">
    <location>
        <position position="157"/>
    </location>
    <ligand>
        <name>ATP</name>
        <dbReference type="ChEBI" id="CHEBI:30616"/>
    </ligand>
</feature>
<proteinExistence type="inferred from homology"/>
<keyword id="KW-0028">Amino-acid biosynthesis</keyword>
<keyword id="KW-0057">Aromatic amino acid biosynthesis</keyword>
<keyword id="KW-0067">ATP-binding</keyword>
<keyword id="KW-0963">Cytoplasm</keyword>
<keyword id="KW-0418">Kinase</keyword>
<keyword id="KW-0460">Magnesium</keyword>
<keyword id="KW-0479">Metal-binding</keyword>
<keyword id="KW-0547">Nucleotide-binding</keyword>
<keyword id="KW-0808">Transferase</keyword>
<protein>
    <recommendedName>
        <fullName evidence="1">Shikimate kinase 1</fullName>
        <shortName evidence="1">SK 1</shortName>
        <ecNumber evidence="1">2.7.1.71</ecNumber>
    </recommendedName>
</protein>
<reference key="1">
    <citation type="journal article" date="2005" name="Nucleic Acids Res.">
        <title>Genome dynamics and diversity of Shigella species, the etiologic agents of bacillary dysentery.</title>
        <authorList>
            <person name="Yang F."/>
            <person name="Yang J."/>
            <person name="Zhang X."/>
            <person name="Chen L."/>
            <person name="Jiang Y."/>
            <person name="Yan Y."/>
            <person name="Tang X."/>
            <person name="Wang J."/>
            <person name="Xiong Z."/>
            <person name="Dong J."/>
            <person name="Xue Y."/>
            <person name="Zhu Y."/>
            <person name="Xu X."/>
            <person name="Sun L."/>
            <person name="Chen S."/>
            <person name="Nie H."/>
            <person name="Peng J."/>
            <person name="Xu J."/>
            <person name="Wang Y."/>
            <person name="Yuan Z."/>
            <person name="Wen Y."/>
            <person name="Yao Z."/>
            <person name="Shen Y."/>
            <person name="Qiang B."/>
            <person name="Hou Y."/>
            <person name="Yu J."/>
            <person name="Jin Q."/>
        </authorList>
    </citation>
    <scope>NUCLEOTIDE SEQUENCE [LARGE SCALE GENOMIC DNA]</scope>
    <source>
        <strain>Sb227</strain>
    </source>
</reference>
<comment type="function">
    <text evidence="1">Catalyzes the specific phosphorylation of the 3-hydroxyl group of shikimic acid using ATP as a cosubstrate.</text>
</comment>
<comment type="catalytic activity">
    <reaction evidence="1">
        <text>shikimate + ATP = 3-phosphoshikimate + ADP + H(+)</text>
        <dbReference type="Rhea" id="RHEA:13121"/>
        <dbReference type="ChEBI" id="CHEBI:15378"/>
        <dbReference type="ChEBI" id="CHEBI:30616"/>
        <dbReference type="ChEBI" id="CHEBI:36208"/>
        <dbReference type="ChEBI" id="CHEBI:145989"/>
        <dbReference type="ChEBI" id="CHEBI:456216"/>
        <dbReference type="EC" id="2.7.1.71"/>
    </reaction>
</comment>
<comment type="cofactor">
    <cofactor evidence="1">
        <name>Mg(2+)</name>
        <dbReference type="ChEBI" id="CHEBI:18420"/>
    </cofactor>
    <text evidence="1">Binds 1 Mg(2+) ion per subunit.</text>
</comment>
<comment type="pathway">
    <text evidence="1">Metabolic intermediate biosynthesis; chorismate biosynthesis; chorismate from D-erythrose 4-phosphate and phosphoenolpyruvate: step 5/7.</text>
</comment>
<comment type="subunit">
    <text evidence="1">Monomer.</text>
</comment>
<comment type="subcellular location">
    <subcellularLocation>
        <location evidence="1">Cytoplasm</location>
    </subcellularLocation>
</comment>
<comment type="similarity">
    <text evidence="1">Belongs to the shikimate kinase family.</text>
</comment>
<name>AROK_SHIBS</name>
<sequence>MAEKRNIFLVGPMGAGKSTIGRQLAQQLNMEFYDSDQEIEKRTGADVGWVFDLEGEEGFRDREEKVINELTEKQGIVLATGGGSVKSRETRNRLSARGVVVYLETTIEKQLARTQRDKKRPLLHVETPPREVLEALANERNPLYEEIADVTIRTDDQSAKVVANQIIHMLESN</sequence>